<protein>
    <recommendedName>
        <fullName evidence="1">Deoxyribose-phosphate aldolase</fullName>
        <shortName evidence="1">DERA</shortName>
        <ecNumber evidence="1">4.1.2.4</ecNumber>
    </recommendedName>
    <alternativeName>
        <fullName evidence="1">2-deoxy-D-ribose 5-phosphate aldolase</fullName>
    </alternativeName>
    <alternativeName>
        <fullName evidence="1">Phosphodeoxyriboaldolase</fullName>
        <shortName evidence="1">Deoxyriboaldolase</shortName>
    </alternativeName>
</protein>
<evidence type="ECO:0000255" key="1">
    <source>
        <dbReference type="HAMAP-Rule" id="MF_00592"/>
    </source>
</evidence>
<accession>A1AJU8</accession>
<gene>
    <name evidence="1" type="primary">deoC</name>
    <name type="ordered locus">Ecok1_44440</name>
    <name type="ORF">APECO1_2000</name>
</gene>
<feature type="chain" id="PRO_1000072596" description="Deoxyribose-phosphate aldolase">
    <location>
        <begin position="1"/>
        <end position="259"/>
    </location>
</feature>
<feature type="active site" description="Proton donor/acceptor" evidence="1">
    <location>
        <position position="102"/>
    </location>
</feature>
<feature type="active site" description="Schiff-base intermediate with acetaldehyde" evidence="1">
    <location>
        <position position="167"/>
    </location>
</feature>
<feature type="active site" description="Proton donor/acceptor" evidence="1">
    <location>
        <position position="201"/>
    </location>
</feature>
<reference key="1">
    <citation type="journal article" date="2007" name="J. Bacteriol.">
        <title>The genome sequence of avian pathogenic Escherichia coli strain O1:K1:H7 shares strong similarities with human extraintestinal pathogenic E. coli genomes.</title>
        <authorList>
            <person name="Johnson T.J."/>
            <person name="Kariyawasam S."/>
            <person name="Wannemuehler Y."/>
            <person name="Mangiamele P."/>
            <person name="Johnson S.J."/>
            <person name="Doetkott C."/>
            <person name="Skyberg J.A."/>
            <person name="Lynne A.M."/>
            <person name="Johnson J.R."/>
            <person name="Nolan L.K."/>
        </authorList>
    </citation>
    <scope>NUCLEOTIDE SEQUENCE [LARGE SCALE GENOMIC DNA]</scope>
</reference>
<name>DEOC_ECOK1</name>
<dbReference type="EC" id="4.1.2.4" evidence="1"/>
<dbReference type="EMBL" id="CP000468">
    <property type="protein sequence ID" value="ABJ03938.1"/>
    <property type="molecule type" value="Genomic_DNA"/>
</dbReference>
<dbReference type="RefSeq" id="WP_001350777.1">
    <property type="nucleotide sequence ID" value="NZ_CADILS010000013.1"/>
</dbReference>
<dbReference type="SMR" id="A1AJU8"/>
<dbReference type="KEGG" id="ecv:APECO1_2000"/>
<dbReference type="HOGENOM" id="CLU_053595_3_1_6"/>
<dbReference type="UniPathway" id="UPA00002">
    <property type="reaction ID" value="UER00468"/>
</dbReference>
<dbReference type="Proteomes" id="UP000008216">
    <property type="component" value="Chromosome"/>
</dbReference>
<dbReference type="GO" id="GO:0005737">
    <property type="term" value="C:cytoplasm"/>
    <property type="evidence" value="ECO:0007669"/>
    <property type="project" value="UniProtKB-SubCell"/>
</dbReference>
<dbReference type="GO" id="GO:0004139">
    <property type="term" value="F:deoxyribose-phosphate aldolase activity"/>
    <property type="evidence" value="ECO:0007669"/>
    <property type="project" value="UniProtKB-UniRule"/>
</dbReference>
<dbReference type="GO" id="GO:0006018">
    <property type="term" value="P:2-deoxyribose 1-phosphate catabolic process"/>
    <property type="evidence" value="ECO:0007669"/>
    <property type="project" value="UniProtKB-UniRule"/>
</dbReference>
<dbReference type="GO" id="GO:0016052">
    <property type="term" value="P:carbohydrate catabolic process"/>
    <property type="evidence" value="ECO:0007669"/>
    <property type="project" value="TreeGrafter"/>
</dbReference>
<dbReference type="GO" id="GO:0009264">
    <property type="term" value="P:deoxyribonucleotide catabolic process"/>
    <property type="evidence" value="ECO:0007669"/>
    <property type="project" value="InterPro"/>
</dbReference>
<dbReference type="CDD" id="cd00959">
    <property type="entry name" value="DeoC"/>
    <property type="match status" value="1"/>
</dbReference>
<dbReference type="FunFam" id="3.20.20.70:FF:000034">
    <property type="entry name" value="Deoxyribose-phosphate aldolase"/>
    <property type="match status" value="1"/>
</dbReference>
<dbReference type="Gene3D" id="3.20.20.70">
    <property type="entry name" value="Aldolase class I"/>
    <property type="match status" value="1"/>
</dbReference>
<dbReference type="HAMAP" id="MF_00592">
    <property type="entry name" value="DeoC_type2"/>
    <property type="match status" value="1"/>
</dbReference>
<dbReference type="InterPro" id="IPR013785">
    <property type="entry name" value="Aldolase_TIM"/>
</dbReference>
<dbReference type="InterPro" id="IPR011343">
    <property type="entry name" value="DeoC"/>
</dbReference>
<dbReference type="InterPro" id="IPR002915">
    <property type="entry name" value="DeoC/FbaB/LacD_aldolase"/>
</dbReference>
<dbReference type="InterPro" id="IPR023649">
    <property type="entry name" value="DeoC_typeII"/>
</dbReference>
<dbReference type="NCBIfam" id="TIGR00126">
    <property type="entry name" value="deoC"/>
    <property type="match status" value="1"/>
</dbReference>
<dbReference type="PANTHER" id="PTHR10889">
    <property type="entry name" value="DEOXYRIBOSE-PHOSPHATE ALDOLASE"/>
    <property type="match status" value="1"/>
</dbReference>
<dbReference type="PANTHER" id="PTHR10889:SF3">
    <property type="entry name" value="DEOXYRIBOSE-PHOSPHATE ALDOLASE"/>
    <property type="match status" value="1"/>
</dbReference>
<dbReference type="Pfam" id="PF01791">
    <property type="entry name" value="DeoC"/>
    <property type="match status" value="1"/>
</dbReference>
<dbReference type="PIRSF" id="PIRSF001357">
    <property type="entry name" value="DeoC"/>
    <property type="match status" value="1"/>
</dbReference>
<dbReference type="SMART" id="SM01133">
    <property type="entry name" value="DeoC"/>
    <property type="match status" value="1"/>
</dbReference>
<dbReference type="SUPFAM" id="SSF51569">
    <property type="entry name" value="Aldolase"/>
    <property type="match status" value="1"/>
</dbReference>
<keyword id="KW-0963">Cytoplasm</keyword>
<keyword id="KW-0456">Lyase</keyword>
<keyword id="KW-1185">Reference proteome</keyword>
<keyword id="KW-0704">Schiff base</keyword>
<sequence length="259" mass="27760">MTDLKASSLRALKLMDLTTLNDDDTDEKVIALCHQAKTPVGNTAAICIYPRFIPIARKTLKEQGTPEIRIATVTNFPHGNDDIEIALAETRAAIAYGADEVDVVFPYRALMAGNEQVGFDLVKACKEACAAANVLLKVIIETGELKDEALIRKASEISIKAGADFIKTSTGKVAVNATPESARIMMEVIRDMGVEKIVGFKPAGGVRTAEDAQKYLAIADELFGADWADARHYRFGASSLLASLLKALGHGDGKSASSY</sequence>
<proteinExistence type="inferred from homology"/>
<organism>
    <name type="scientific">Escherichia coli O1:K1 / APEC</name>
    <dbReference type="NCBI Taxonomy" id="405955"/>
    <lineage>
        <taxon>Bacteria</taxon>
        <taxon>Pseudomonadati</taxon>
        <taxon>Pseudomonadota</taxon>
        <taxon>Gammaproteobacteria</taxon>
        <taxon>Enterobacterales</taxon>
        <taxon>Enterobacteriaceae</taxon>
        <taxon>Escherichia</taxon>
    </lineage>
</organism>
<comment type="function">
    <text evidence="1">Catalyzes a reversible aldol reaction between acetaldehyde and D-glyceraldehyde 3-phosphate to generate 2-deoxy-D-ribose 5-phosphate.</text>
</comment>
<comment type="catalytic activity">
    <reaction evidence="1">
        <text>2-deoxy-D-ribose 5-phosphate = D-glyceraldehyde 3-phosphate + acetaldehyde</text>
        <dbReference type="Rhea" id="RHEA:12821"/>
        <dbReference type="ChEBI" id="CHEBI:15343"/>
        <dbReference type="ChEBI" id="CHEBI:59776"/>
        <dbReference type="ChEBI" id="CHEBI:62877"/>
        <dbReference type="EC" id="4.1.2.4"/>
    </reaction>
</comment>
<comment type="pathway">
    <text evidence="1">Carbohydrate degradation; 2-deoxy-D-ribose 1-phosphate degradation; D-glyceraldehyde 3-phosphate and acetaldehyde from 2-deoxy-alpha-D-ribose 1-phosphate: step 2/2.</text>
</comment>
<comment type="subcellular location">
    <subcellularLocation>
        <location evidence="1">Cytoplasm</location>
    </subcellularLocation>
</comment>
<comment type="similarity">
    <text evidence="1">Belongs to the DeoC/FbaB aldolase family. DeoC type 2 subfamily.</text>
</comment>